<name>LIPA_PSEA6</name>
<feature type="chain" id="PRO_0000325287" description="Lipoyl synthase">
    <location>
        <begin position="1"/>
        <end position="320"/>
    </location>
</feature>
<feature type="domain" description="Radical SAM core" evidence="2">
    <location>
        <begin position="79"/>
        <end position="296"/>
    </location>
</feature>
<feature type="binding site" evidence="1">
    <location>
        <position position="67"/>
    </location>
    <ligand>
        <name>[4Fe-4S] cluster</name>
        <dbReference type="ChEBI" id="CHEBI:49883"/>
        <label>1</label>
    </ligand>
</feature>
<feature type="binding site" evidence="1">
    <location>
        <position position="72"/>
    </location>
    <ligand>
        <name>[4Fe-4S] cluster</name>
        <dbReference type="ChEBI" id="CHEBI:49883"/>
        <label>1</label>
    </ligand>
</feature>
<feature type="binding site" evidence="1">
    <location>
        <position position="78"/>
    </location>
    <ligand>
        <name>[4Fe-4S] cluster</name>
        <dbReference type="ChEBI" id="CHEBI:49883"/>
        <label>1</label>
    </ligand>
</feature>
<feature type="binding site" evidence="1">
    <location>
        <position position="93"/>
    </location>
    <ligand>
        <name>[4Fe-4S] cluster</name>
        <dbReference type="ChEBI" id="CHEBI:49883"/>
        <label>2</label>
        <note>4Fe-4S-S-AdoMet</note>
    </ligand>
</feature>
<feature type="binding site" evidence="1">
    <location>
        <position position="97"/>
    </location>
    <ligand>
        <name>[4Fe-4S] cluster</name>
        <dbReference type="ChEBI" id="CHEBI:49883"/>
        <label>2</label>
        <note>4Fe-4S-S-AdoMet</note>
    </ligand>
</feature>
<feature type="binding site" evidence="1">
    <location>
        <position position="100"/>
    </location>
    <ligand>
        <name>[4Fe-4S] cluster</name>
        <dbReference type="ChEBI" id="CHEBI:49883"/>
        <label>2</label>
        <note>4Fe-4S-S-AdoMet</note>
    </ligand>
</feature>
<feature type="binding site" evidence="1">
    <location>
        <position position="307"/>
    </location>
    <ligand>
        <name>[4Fe-4S] cluster</name>
        <dbReference type="ChEBI" id="CHEBI:49883"/>
        <label>1</label>
    </ligand>
</feature>
<accession>Q15VL3</accession>
<evidence type="ECO:0000255" key="1">
    <source>
        <dbReference type="HAMAP-Rule" id="MF_00206"/>
    </source>
</evidence>
<evidence type="ECO:0000255" key="2">
    <source>
        <dbReference type="PROSITE-ProRule" id="PRU01266"/>
    </source>
</evidence>
<organism>
    <name type="scientific">Pseudoalteromonas atlantica (strain T6c / ATCC BAA-1087)</name>
    <dbReference type="NCBI Taxonomy" id="3042615"/>
    <lineage>
        <taxon>Bacteria</taxon>
        <taxon>Pseudomonadati</taxon>
        <taxon>Pseudomonadota</taxon>
        <taxon>Gammaproteobacteria</taxon>
        <taxon>Alteromonadales</taxon>
        <taxon>Alteromonadaceae</taxon>
        <taxon>Paraglaciecola</taxon>
    </lineage>
</organism>
<comment type="function">
    <text evidence="1">Catalyzes the radical-mediated insertion of two sulfur atoms into the C-6 and C-8 positions of the octanoyl moiety bound to the lipoyl domains of lipoate-dependent enzymes, thereby converting the octanoylated domains into lipoylated derivatives.</text>
</comment>
<comment type="catalytic activity">
    <reaction evidence="1">
        <text>[[Fe-S] cluster scaffold protein carrying a second [4Fe-4S](2+) cluster] + N(6)-octanoyl-L-lysyl-[protein] + 2 oxidized [2Fe-2S]-[ferredoxin] + 2 S-adenosyl-L-methionine + 4 H(+) = [[Fe-S] cluster scaffold protein] + N(6)-[(R)-dihydrolipoyl]-L-lysyl-[protein] + 4 Fe(3+) + 2 hydrogen sulfide + 2 5'-deoxyadenosine + 2 L-methionine + 2 reduced [2Fe-2S]-[ferredoxin]</text>
        <dbReference type="Rhea" id="RHEA:16585"/>
        <dbReference type="Rhea" id="RHEA-COMP:9928"/>
        <dbReference type="Rhea" id="RHEA-COMP:10000"/>
        <dbReference type="Rhea" id="RHEA-COMP:10001"/>
        <dbReference type="Rhea" id="RHEA-COMP:10475"/>
        <dbReference type="Rhea" id="RHEA-COMP:14568"/>
        <dbReference type="Rhea" id="RHEA-COMP:14569"/>
        <dbReference type="ChEBI" id="CHEBI:15378"/>
        <dbReference type="ChEBI" id="CHEBI:17319"/>
        <dbReference type="ChEBI" id="CHEBI:29034"/>
        <dbReference type="ChEBI" id="CHEBI:29919"/>
        <dbReference type="ChEBI" id="CHEBI:33722"/>
        <dbReference type="ChEBI" id="CHEBI:33737"/>
        <dbReference type="ChEBI" id="CHEBI:33738"/>
        <dbReference type="ChEBI" id="CHEBI:57844"/>
        <dbReference type="ChEBI" id="CHEBI:59789"/>
        <dbReference type="ChEBI" id="CHEBI:78809"/>
        <dbReference type="ChEBI" id="CHEBI:83100"/>
        <dbReference type="EC" id="2.8.1.8"/>
    </reaction>
</comment>
<comment type="cofactor">
    <cofactor evidence="1">
        <name>[4Fe-4S] cluster</name>
        <dbReference type="ChEBI" id="CHEBI:49883"/>
    </cofactor>
    <text evidence="1">Binds 2 [4Fe-4S] clusters per subunit. One cluster is coordinated with 3 cysteines and an exchangeable S-adenosyl-L-methionine.</text>
</comment>
<comment type="pathway">
    <text evidence="1">Protein modification; protein lipoylation via endogenous pathway; protein N(6)-(lipoyl)lysine from octanoyl-[acyl-carrier-protein]: step 2/2.</text>
</comment>
<comment type="subcellular location">
    <subcellularLocation>
        <location evidence="1">Cytoplasm</location>
    </subcellularLocation>
</comment>
<comment type="similarity">
    <text evidence="1">Belongs to the radical SAM superfamily. Lipoyl synthase family.</text>
</comment>
<dbReference type="EC" id="2.8.1.8" evidence="1"/>
<dbReference type="EMBL" id="CP000388">
    <property type="protein sequence ID" value="ABG40075.1"/>
    <property type="molecule type" value="Genomic_DNA"/>
</dbReference>
<dbReference type="RefSeq" id="WP_011574390.1">
    <property type="nucleotide sequence ID" value="NC_008228.1"/>
</dbReference>
<dbReference type="SMR" id="Q15VL3"/>
<dbReference type="STRING" id="342610.Patl_1553"/>
<dbReference type="KEGG" id="pat:Patl_1553"/>
<dbReference type="eggNOG" id="COG0320">
    <property type="taxonomic scope" value="Bacteria"/>
</dbReference>
<dbReference type="HOGENOM" id="CLU_033144_2_1_6"/>
<dbReference type="OrthoDB" id="9787898at2"/>
<dbReference type="UniPathway" id="UPA00538">
    <property type="reaction ID" value="UER00593"/>
</dbReference>
<dbReference type="Proteomes" id="UP000001981">
    <property type="component" value="Chromosome"/>
</dbReference>
<dbReference type="GO" id="GO:0005737">
    <property type="term" value="C:cytoplasm"/>
    <property type="evidence" value="ECO:0007669"/>
    <property type="project" value="UniProtKB-SubCell"/>
</dbReference>
<dbReference type="GO" id="GO:0051539">
    <property type="term" value="F:4 iron, 4 sulfur cluster binding"/>
    <property type="evidence" value="ECO:0007669"/>
    <property type="project" value="UniProtKB-UniRule"/>
</dbReference>
<dbReference type="GO" id="GO:0016992">
    <property type="term" value="F:lipoate synthase activity"/>
    <property type="evidence" value="ECO:0007669"/>
    <property type="project" value="UniProtKB-UniRule"/>
</dbReference>
<dbReference type="GO" id="GO:0046872">
    <property type="term" value="F:metal ion binding"/>
    <property type="evidence" value="ECO:0007669"/>
    <property type="project" value="UniProtKB-KW"/>
</dbReference>
<dbReference type="CDD" id="cd01335">
    <property type="entry name" value="Radical_SAM"/>
    <property type="match status" value="1"/>
</dbReference>
<dbReference type="FunFam" id="3.20.20.70:FF:000023">
    <property type="entry name" value="Lipoyl synthase"/>
    <property type="match status" value="1"/>
</dbReference>
<dbReference type="Gene3D" id="3.20.20.70">
    <property type="entry name" value="Aldolase class I"/>
    <property type="match status" value="1"/>
</dbReference>
<dbReference type="HAMAP" id="MF_00206">
    <property type="entry name" value="Lipoyl_synth"/>
    <property type="match status" value="1"/>
</dbReference>
<dbReference type="InterPro" id="IPR013785">
    <property type="entry name" value="Aldolase_TIM"/>
</dbReference>
<dbReference type="InterPro" id="IPR006638">
    <property type="entry name" value="Elp3/MiaA/NifB-like_rSAM"/>
</dbReference>
<dbReference type="InterPro" id="IPR031691">
    <property type="entry name" value="LIAS_N"/>
</dbReference>
<dbReference type="InterPro" id="IPR003698">
    <property type="entry name" value="Lipoyl_synth"/>
</dbReference>
<dbReference type="InterPro" id="IPR007197">
    <property type="entry name" value="rSAM"/>
</dbReference>
<dbReference type="NCBIfam" id="TIGR00510">
    <property type="entry name" value="lipA"/>
    <property type="match status" value="1"/>
</dbReference>
<dbReference type="NCBIfam" id="NF004019">
    <property type="entry name" value="PRK05481.1"/>
    <property type="match status" value="1"/>
</dbReference>
<dbReference type="NCBIfam" id="NF009544">
    <property type="entry name" value="PRK12928.1"/>
    <property type="match status" value="1"/>
</dbReference>
<dbReference type="PANTHER" id="PTHR10949">
    <property type="entry name" value="LIPOYL SYNTHASE"/>
    <property type="match status" value="1"/>
</dbReference>
<dbReference type="PANTHER" id="PTHR10949:SF0">
    <property type="entry name" value="LIPOYL SYNTHASE, MITOCHONDRIAL"/>
    <property type="match status" value="1"/>
</dbReference>
<dbReference type="Pfam" id="PF16881">
    <property type="entry name" value="LIAS_N"/>
    <property type="match status" value="1"/>
</dbReference>
<dbReference type="Pfam" id="PF04055">
    <property type="entry name" value="Radical_SAM"/>
    <property type="match status" value="1"/>
</dbReference>
<dbReference type="PIRSF" id="PIRSF005963">
    <property type="entry name" value="Lipoyl_synth"/>
    <property type="match status" value="1"/>
</dbReference>
<dbReference type="SFLD" id="SFLDF00271">
    <property type="entry name" value="lipoyl_synthase"/>
    <property type="match status" value="1"/>
</dbReference>
<dbReference type="SFLD" id="SFLDG01058">
    <property type="entry name" value="lipoyl_synthase_like"/>
    <property type="match status" value="1"/>
</dbReference>
<dbReference type="SMART" id="SM00729">
    <property type="entry name" value="Elp3"/>
    <property type="match status" value="1"/>
</dbReference>
<dbReference type="SUPFAM" id="SSF102114">
    <property type="entry name" value="Radical SAM enzymes"/>
    <property type="match status" value="1"/>
</dbReference>
<dbReference type="PROSITE" id="PS51918">
    <property type="entry name" value="RADICAL_SAM"/>
    <property type="match status" value="1"/>
</dbReference>
<protein>
    <recommendedName>
        <fullName evidence="1">Lipoyl synthase</fullName>
        <ecNumber evidence="1">2.8.1.8</ecNumber>
    </recommendedName>
    <alternativeName>
        <fullName evidence="1">Lip-syn</fullName>
        <shortName evidence="1">LS</shortName>
    </alternativeName>
    <alternativeName>
        <fullName evidence="1">Lipoate synthase</fullName>
    </alternativeName>
    <alternativeName>
        <fullName evidence="1">Lipoic acid synthase</fullName>
    </alternativeName>
    <alternativeName>
        <fullName evidence="1">Sulfur insertion protein LipA</fullName>
    </alternativeName>
</protein>
<sequence>MSNARPQAGEKLRDDEKVKHIPITIMPTEKAEMLRKPEWIKIRLPRTTDRIDHIKKTLRKNNLHSVCEEASCPNLAECFNHGTATFMILGDICTRRCPFCDVAHGKPLPPSAEEPVKLAKTIAEMQLKYVVITSVDRDDLRDGGAQHFVDCINAIREHSPTTKIEVLVPDFRGRMDKALEILKNGVPDVFNHNLETIPRLYRECRPGANYQWSLDLLKKFKEQHPDIPTKSGLMMGMGENKEEIAEVLKDLRAHNVEMLTLGQYLQPSKHHFPLKRYVHPTEFDELGVIAKEIGFTHAACGPMVRSSYHADKQAAGVEVK</sequence>
<proteinExistence type="inferred from homology"/>
<keyword id="KW-0004">4Fe-4S</keyword>
<keyword id="KW-0963">Cytoplasm</keyword>
<keyword id="KW-0408">Iron</keyword>
<keyword id="KW-0411">Iron-sulfur</keyword>
<keyword id="KW-0479">Metal-binding</keyword>
<keyword id="KW-0949">S-adenosyl-L-methionine</keyword>
<keyword id="KW-0808">Transferase</keyword>
<reference key="1">
    <citation type="submission" date="2006-06" db="EMBL/GenBank/DDBJ databases">
        <title>Complete sequence of Pseudoalteromonas atlantica T6c.</title>
        <authorList>
            <consortium name="US DOE Joint Genome Institute"/>
            <person name="Copeland A."/>
            <person name="Lucas S."/>
            <person name="Lapidus A."/>
            <person name="Barry K."/>
            <person name="Detter J.C."/>
            <person name="Glavina del Rio T."/>
            <person name="Hammon N."/>
            <person name="Israni S."/>
            <person name="Dalin E."/>
            <person name="Tice H."/>
            <person name="Pitluck S."/>
            <person name="Saunders E."/>
            <person name="Brettin T."/>
            <person name="Bruce D."/>
            <person name="Han C."/>
            <person name="Tapia R."/>
            <person name="Gilna P."/>
            <person name="Schmutz J."/>
            <person name="Larimer F."/>
            <person name="Land M."/>
            <person name="Hauser L."/>
            <person name="Kyrpides N."/>
            <person name="Kim E."/>
            <person name="Karls A.C."/>
            <person name="Bartlett D."/>
            <person name="Higgins B.P."/>
            <person name="Richardson P."/>
        </authorList>
    </citation>
    <scope>NUCLEOTIDE SEQUENCE [LARGE SCALE GENOMIC DNA]</scope>
    <source>
        <strain>T6c / ATCC BAA-1087</strain>
    </source>
</reference>
<gene>
    <name evidence="1" type="primary">lipA</name>
    <name type="ordered locus">Patl_1553</name>
</gene>